<feature type="chain" id="PRO_0000184227" description="Ribosomal RNA small subunit methyltransferase G">
    <location>
        <begin position="1"/>
        <end position="260"/>
    </location>
</feature>
<feature type="region of interest" description="Disordered" evidence="2">
    <location>
        <begin position="1"/>
        <end position="45"/>
    </location>
</feature>
<feature type="compositionally biased region" description="Low complexity" evidence="2">
    <location>
        <begin position="9"/>
        <end position="20"/>
    </location>
</feature>
<feature type="compositionally biased region" description="Polar residues" evidence="2">
    <location>
        <begin position="33"/>
        <end position="45"/>
    </location>
</feature>
<feature type="binding site" evidence="1">
    <location>
        <position position="123"/>
    </location>
    <ligand>
        <name>S-adenosyl-L-methionine</name>
        <dbReference type="ChEBI" id="CHEBI:59789"/>
    </ligand>
</feature>
<feature type="binding site" evidence="1">
    <location>
        <position position="128"/>
    </location>
    <ligand>
        <name>S-adenosyl-L-methionine</name>
        <dbReference type="ChEBI" id="CHEBI:59789"/>
    </ligand>
</feature>
<feature type="binding site" evidence="1">
    <location>
        <position position="193"/>
    </location>
    <ligand>
        <name>S-adenosyl-L-methionine</name>
        <dbReference type="ChEBI" id="CHEBI:59789"/>
    </ligand>
</feature>
<gene>
    <name evidence="1" type="primary">rsmG</name>
    <name type="ordered locus">bll0632</name>
</gene>
<comment type="function">
    <text evidence="1">Specifically methylates the N7 position of guanine in position 527 of 16S rRNA.</text>
</comment>
<comment type="catalytic activity">
    <reaction evidence="1">
        <text>guanosine(527) in 16S rRNA + S-adenosyl-L-methionine = N(7)-methylguanosine(527) in 16S rRNA + S-adenosyl-L-homocysteine</text>
        <dbReference type="Rhea" id="RHEA:42732"/>
        <dbReference type="Rhea" id="RHEA-COMP:10209"/>
        <dbReference type="Rhea" id="RHEA-COMP:10210"/>
        <dbReference type="ChEBI" id="CHEBI:57856"/>
        <dbReference type="ChEBI" id="CHEBI:59789"/>
        <dbReference type="ChEBI" id="CHEBI:74269"/>
        <dbReference type="ChEBI" id="CHEBI:74480"/>
        <dbReference type="EC" id="2.1.1.170"/>
    </reaction>
</comment>
<comment type="subcellular location">
    <subcellularLocation>
        <location evidence="1">Cytoplasm</location>
    </subcellularLocation>
</comment>
<comment type="similarity">
    <text evidence="1">Belongs to the methyltransferase superfamily. RNA methyltransferase RsmG family.</text>
</comment>
<organism>
    <name type="scientific">Bradyrhizobium diazoefficiens (strain JCM 10833 / BCRC 13528 / IAM 13628 / NBRC 14792 / USDA 110)</name>
    <dbReference type="NCBI Taxonomy" id="224911"/>
    <lineage>
        <taxon>Bacteria</taxon>
        <taxon>Pseudomonadati</taxon>
        <taxon>Pseudomonadota</taxon>
        <taxon>Alphaproteobacteria</taxon>
        <taxon>Hyphomicrobiales</taxon>
        <taxon>Nitrobacteraceae</taxon>
        <taxon>Bradyrhizobium</taxon>
    </lineage>
</organism>
<sequence length="260" mass="27632">MKQRGPAGGRSSSPKPSAPGSGAGEGPDGRSAPASQKINKASANDRSLDSVIAADKIAALKLAPVSRETEARLDRYIALLREWQAKTNLVAPSTLPHLWTRHIADSLQLVDLAPTARRWADLGSGGGFPGVVLACTMAETPGASVHLVERIAKKAAFLREAIRITTSPGVVHLAEIGDNVDRITGPVDCVTARALAPLHQLIGFAEPLMRQGAKALFPKGQDVEAELTEAAKYWNIQPQLHQSRTGDGWIVELNAAERRG</sequence>
<evidence type="ECO:0000255" key="1">
    <source>
        <dbReference type="HAMAP-Rule" id="MF_00074"/>
    </source>
</evidence>
<evidence type="ECO:0000256" key="2">
    <source>
        <dbReference type="SAM" id="MobiDB-lite"/>
    </source>
</evidence>
<reference key="1">
    <citation type="journal article" date="2002" name="DNA Res.">
        <title>Complete genomic sequence of nitrogen-fixing symbiotic bacterium Bradyrhizobium japonicum USDA110.</title>
        <authorList>
            <person name="Kaneko T."/>
            <person name="Nakamura Y."/>
            <person name="Sato S."/>
            <person name="Minamisawa K."/>
            <person name="Uchiumi T."/>
            <person name="Sasamoto S."/>
            <person name="Watanabe A."/>
            <person name="Idesawa K."/>
            <person name="Iriguchi M."/>
            <person name="Kawashima K."/>
            <person name="Kohara M."/>
            <person name="Matsumoto M."/>
            <person name="Shimpo S."/>
            <person name="Tsuruoka H."/>
            <person name="Wada T."/>
            <person name="Yamada M."/>
            <person name="Tabata S."/>
        </authorList>
    </citation>
    <scope>NUCLEOTIDE SEQUENCE [LARGE SCALE GENOMIC DNA]</scope>
    <source>
        <strain>JCM 10833 / BCRC 13528 / IAM 13628 / NBRC 14792 / USDA 110</strain>
    </source>
</reference>
<name>RSMG_BRADU</name>
<proteinExistence type="inferred from homology"/>
<protein>
    <recommendedName>
        <fullName evidence="1">Ribosomal RNA small subunit methyltransferase G</fullName>
        <ecNumber evidence="1">2.1.1.170</ecNumber>
    </recommendedName>
    <alternativeName>
        <fullName evidence="1">16S rRNA 7-methylguanosine methyltransferase</fullName>
        <shortName evidence="1">16S rRNA m7G methyltransferase</shortName>
    </alternativeName>
</protein>
<keyword id="KW-0963">Cytoplasm</keyword>
<keyword id="KW-0489">Methyltransferase</keyword>
<keyword id="KW-1185">Reference proteome</keyword>
<keyword id="KW-0698">rRNA processing</keyword>
<keyword id="KW-0949">S-adenosyl-L-methionine</keyword>
<keyword id="KW-0808">Transferase</keyword>
<accession>Q89WP6</accession>
<dbReference type="EC" id="2.1.1.170" evidence="1"/>
<dbReference type="EMBL" id="BA000040">
    <property type="protein sequence ID" value="BAC45897.1"/>
    <property type="molecule type" value="Genomic_DNA"/>
</dbReference>
<dbReference type="RefSeq" id="NP_767272.1">
    <property type="nucleotide sequence ID" value="NC_004463.1"/>
</dbReference>
<dbReference type="SMR" id="Q89WP6"/>
<dbReference type="FunCoup" id="Q89WP6">
    <property type="interactions" value="570"/>
</dbReference>
<dbReference type="STRING" id="224911.AAV28_42435"/>
<dbReference type="EnsemblBacteria" id="BAC45897">
    <property type="protein sequence ID" value="BAC45897"/>
    <property type="gene ID" value="BAC45897"/>
</dbReference>
<dbReference type="KEGG" id="bja:bll0632"/>
<dbReference type="PATRIC" id="fig|224911.44.peg.9172"/>
<dbReference type="eggNOG" id="COG0357">
    <property type="taxonomic scope" value="Bacteria"/>
</dbReference>
<dbReference type="HOGENOM" id="CLU_065341_1_0_5"/>
<dbReference type="InParanoid" id="Q89WP6"/>
<dbReference type="OrthoDB" id="9808773at2"/>
<dbReference type="PhylomeDB" id="Q89WP6"/>
<dbReference type="Proteomes" id="UP000002526">
    <property type="component" value="Chromosome"/>
</dbReference>
<dbReference type="GO" id="GO:0005829">
    <property type="term" value="C:cytosol"/>
    <property type="evidence" value="ECO:0000318"/>
    <property type="project" value="GO_Central"/>
</dbReference>
<dbReference type="GO" id="GO:0070043">
    <property type="term" value="F:rRNA (guanine-N7-)-methyltransferase activity"/>
    <property type="evidence" value="ECO:0000318"/>
    <property type="project" value="GO_Central"/>
</dbReference>
<dbReference type="CDD" id="cd02440">
    <property type="entry name" value="AdoMet_MTases"/>
    <property type="match status" value="1"/>
</dbReference>
<dbReference type="FunFam" id="3.40.50.150:FF:000834">
    <property type="entry name" value="Ribosomal RNA small subunit methyltransferase G"/>
    <property type="match status" value="1"/>
</dbReference>
<dbReference type="Gene3D" id="3.40.50.150">
    <property type="entry name" value="Vaccinia Virus protein VP39"/>
    <property type="match status" value="1"/>
</dbReference>
<dbReference type="HAMAP" id="MF_00074">
    <property type="entry name" value="16SrRNA_methyltr_G"/>
    <property type="match status" value="1"/>
</dbReference>
<dbReference type="InterPro" id="IPR003682">
    <property type="entry name" value="rRNA_ssu_MeTfrase_G"/>
</dbReference>
<dbReference type="InterPro" id="IPR029063">
    <property type="entry name" value="SAM-dependent_MTases_sf"/>
</dbReference>
<dbReference type="NCBIfam" id="TIGR00138">
    <property type="entry name" value="rsmG_gidB"/>
    <property type="match status" value="1"/>
</dbReference>
<dbReference type="PANTHER" id="PTHR31760">
    <property type="entry name" value="S-ADENOSYL-L-METHIONINE-DEPENDENT METHYLTRANSFERASES SUPERFAMILY PROTEIN"/>
    <property type="match status" value="1"/>
</dbReference>
<dbReference type="PANTHER" id="PTHR31760:SF0">
    <property type="entry name" value="S-ADENOSYL-L-METHIONINE-DEPENDENT METHYLTRANSFERASES SUPERFAMILY PROTEIN"/>
    <property type="match status" value="1"/>
</dbReference>
<dbReference type="Pfam" id="PF02527">
    <property type="entry name" value="GidB"/>
    <property type="match status" value="1"/>
</dbReference>
<dbReference type="PIRSF" id="PIRSF003078">
    <property type="entry name" value="GidB"/>
    <property type="match status" value="1"/>
</dbReference>
<dbReference type="SUPFAM" id="SSF53335">
    <property type="entry name" value="S-adenosyl-L-methionine-dependent methyltransferases"/>
    <property type="match status" value="1"/>
</dbReference>